<gene>
    <name evidence="7 10" type="primary">slc2a10</name>
    <name evidence="8" type="synonym">glut10</name>
</gene>
<organism>
    <name type="scientific">Danio rerio</name>
    <name type="common">Zebrafish</name>
    <name type="synonym">Brachydanio rerio</name>
    <dbReference type="NCBI Taxonomy" id="7955"/>
    <lineage>
        <taxon>Eukaryota</taxon>
        <taxon>Metazoa</taxon>
        <taxon>Chordata</taxon>
        <taxon>Craniata</taxon>
        <taxon>Vertebrata</taxon>
        <taxon>Euteleostomi</taxon>
        <taxon>Actinopterygii</taxon>
        <taxon>Neopterygii</taxon>
        <taxon>Teleostei</taxon>
        <taxon>Ostariophysi</taxon>
        <taxon>Cypriniformes</taxon>
        <taxon>Danionidae</taxon>
        <taxon>Danioninae</taxon>
        <taxon>Danio</taxon>
    </lineage>
</organism>
<name>GTR10_DANRE</name>
<feature type="chain" id="PRO_0000447627" description="Solute carrier family 2, facilitated glucose transporter member 10">
    <location>
        <begin position="1"/>
        <end position="513"/>
    </location>
</feature>
<feature type="topological domain" description="Cytoplasmic" evidence="9">
    <location>
        <begin position="1"/>
        <end position="6"/>
    </location>
</feature>
<feature type="transmembrane region" description="Helical; Name=1" evidence="3">
    <location>
        <begin position="7"/>
        <end position="27"/>
    </location>
</feature>
<feature type="topological domain" description="Extracellular" evidence="9">
    <location>
        <begin position="28"/>
        <end position="46"/>
    </location>
</feature>
<feature type="transmembrane region" description="Helical; Name=2" evidence="3">
    <location>
        <begin position="47"/>
        <end position="67"/>
    </location>
</feature>
<feature type="topological domain" description="Cytoplasmic" evidence="9">
    <location>
        <begin position="68"/>
        <end position="80"/>
    </location>
</feature>
<feature type="transmembrane region" description="Helical; Name=3" evidence="3">
    <location>
        <begin position="81"/>
        <end position="101"/>
    </location>
</feature>
<feature type="topological domain" description="Extracellular" evidence="9">
    <location>
        <begin position="102"/>
        <end position="104"/>
    </location>
</feature>
<feature type="transmembrane region" description="Helical; Name=4" evidence="3">
    <location>
        <begin position="105"/>
        <end position="125"/>
    </location>
</feature>
<feature type="topological domain" description="Cytoplasmic" evidence="9">
    <location>
        <begin position="126"/>
        <end position="130"/>
    </location>
</feature>
<feature type="transmembrane region" description="Helical; Name=5" evidence="3">
    <location>
        <begin position="131"/>
        <end position="151"/>
    </location>
</feature>
<feature type="topological domain" description="Extracellular" evidence="9">
    <location>
        <begin position="152"/>
        <end position="164"/>
    </location>
</feature>
<feature type="transmembrane region" description="Helical; Name=6" evidence="3">
    <location>
        <begin position="165"/>
        <end position="185"/>
    </location>
</feature>
<feature type="topological domain" description="Cytoplasmic" evidence="9">
    <location>
        <begin position="186"/>
        <end position="236"/>
    </location>
</feature>
<feature type="transmembrane region" description="Helical; Name=7" evidence="3">
    <location>
        <begin position="237"/>
        <end position="257"/>
    </location>
</feature>
<feature type="topological domain" description="Extracellular" evidence="9">
    <location>
        <begin position="258"/>
        <end position="272"/>
    </location>
</feature>
<feature type="transmembrane region" description="Helical; Name=8" evidence="3">
    <location>
        <begin position="273"/>
        <end position="293"/>
    </location>
</feature>
<feature type="topological domain" description="Cytoplasmic" evidence="9">
    <location>
        <begin position="294"/>
        <end position="301"/>
    </location>
</feature>
<feature type="transmembrane region" description="Helical; Name=9" evidence="3">
    <location>
        <begin position="302"/>
        <end position="322"/>
    </location>
</feature>
<feature type="topological domain" description="Extracellular" evidence="9">
    <location>
        <begin position="323"/>
        <end position="376"/>
    </location>
</feature>
<feature type="transmembrane region" description="Helical; Name=10" evidence="3">
    <location>
        <begin position="377"/>
        <end position="397"/>
    </location>
</feature>
<feature type="topological domain" description="Cytoplasmic" evidence="9">
    <location>
        <begin position="398"/>
        <end position="422"/>
    </location>
</feature>
<feature type="transmembrane region" description="Helical; Name=11" evidence="3">
    <location>
        <begin position="423"/>
        <end position="443"/>
    </location>
</feature>
<feature type="transmembrane region" description="Helical; Name=12" evidence="3">
    <location>
        <begin position="444"/>
        <end position="464"/>
    </location>
</feature>
<feature type="topological domain" description="Cytoplasmic" evidence="9">
    <location>
        <begin position="465"/>
        <end position="513"/>
    </location>
</feature>
<feature type="binding site" evidence="2">
    <location>
        <begin position="246"/>
        <end position="247"/>
    </location>
    <ligand>
        <name>D-glucose</name>
        <dbReference type="ChEBI" id="CHEBI:4167"/>
    </ligand>
</feature>
<feature type="binding site" evidence="2">
    <location>
        <position position="399"/>
    </location>
    <ligand>
        <name>D-glucose</name>
        <dbReference type="ChEBI" id="CHEBI:4167"/>
    </ligand>
</feature>
<feature type="glycosylation site" description="N-linked (GlcNAc...) asparagine" evidence="4">
    <location>
        <position position="270"/>
    </location>
</feature>
<feature type="glycosylation site" description="N-linked (GlcNAc...) asparagine" evidence="4">
    <location>
        <position position="341"/>
    </location>
</feature>
<feature type="sequence conflict" description="In Ref. 3; AAI53939." evidence="9" ref="3">
    <original>A</original>
    <variation>T</variation>
    <location>
        <position position="85"/>
    </location>
</feature>
<feature type="sequence conflict" description="In Ref. 3; AAI53939." evidence="9" ref="3">
    <original>I</original>
    <variation>V</variation>
    <location>
        <position position="141"/>
    </location>
</feature>
<feature type="sequence conflict" description="In Ref. 1; AEF56581/AEF56582 and 3; AAI53939." evidence="9" ref="1 3">
    <original>I</original>
    <variation>F</variation>
    <location>
        <position position="154"/>
    </location>
</feature>
<feature type="sequence conflict" description="In Ref. 1; AEF56581/AEF56582 and 3; AAI53939." evidence="9" ref="1 3">
    <original>P</original>
    <variation>Q</variation>
    <location>
        <position position="159"/>
    </location>
</feature>
<feature type="sequence conflict" description="In Ref. 1; AEF56581/AEF56582." evidence="9" ref="1">
    <original>H</original>
    <variation>R</variation>
    <location>
        <position position="214"/>
    </location>
</feature>
<feature type="sequence conflict" description="In Ref. 3; AAI53939." evidence="9" ref="3">
    <original>R</original>
    <variation>T</variation>
    <location>
        <position position="323"/>
    </location>
</feature>
<feature type="sequence conflict" description="In Ref. 1; AEF56581/AEF56582 and 3; AAI53939." evidence="9" ref="1 3">
    <original>D</original>
    <variation>E</variation>
    <location>
        <position position="349"/>
    </location>
</feature>
<feature type="sequence conflict" description="In Ref. 3; AAI53939." evidence="9" ref="3">
    <original>A</original>
    <variation>T</variation>
    <location>
        <position position="425"/>
    </location>
</feature>
<feature type="sequence conflict" description="In Ref. 1; AEF56581/AEF56582 and 3; AAI53939." evidence="9" ref="1 3">
    <original>S</original>
    <variation>T</variation>
    <location>
        <position position="430"/>
    </location>
</feature>
<evidence type="ECO:0000250" key="1">
    <source>
        <dbReference type="UniProtKB" id="O95528"/>
    </source>
</evidence>
<evidence type="ECO:0000250" key="2">
    <source>
        <dbReference type="UniProtKB" id="P11169"/>
    </source>
</evidence>
<evidence type="ECO:0000255" key="3"/>
<evidence type="ECO:0000255" key="4">
    <source>
        <dbReference type="PROSITE-ProRule" id="PRU00498"/>
    </source>
</evidence>
<evidence type="ECO:0000269" key="5">
    <source>
    </source>
</evidence>
<evidence type="ECO:0000269" key="6">
    <source>
    </source>
</evidence>
<evidence type="ECO:0000303" key="7">
    <source>
    </source>
</evidence>
<evidence type="ECO:0000303" key="8">
    <source>
    </source>
</evidence>
<evidence type="ECO:0000305" key="9"/>
<evidence type="ECO:0000312" key="10">
    <source>
        <dbReference type="ZFIN" id="ZDB-GENE-080204-6"/>
    </source>
</evidence>
<proteinExistence type="evidence at transcript level"/>
<reference key="1">
    <citation type="journal article" date="2011" name="Int. J. Dev. Biol.">
        <title>Characterization and expression pattern analysis of the facilitative glucose transporter 10 gene (slc2a10) in Danio rerio.</title>
        <authorList>
            <person name="Chiarelli N."/>
            <person name="Ritelli M."/>
            <person name="Zoppi N."/>
            <person name="Benini A."/>
            <person name="Borsani G."/>
            <person name="Barlati S."/>
            <person name="Colombi M."/>
        </authorList>
    </citation>
    <scope>NUCLEOTIDE SEQUENCE [MRNA]</scope>
    <scope>DEVELOPMENTAL STAGE</scope>
    <source>
        <strain>AB</strain>
    </source>
</reference>
<reference key="2">
    <citation type="journal article" date="2013" name="Nature">
        <title>The zebrafish reference genome sequence and its relationship to the human genome.</title>
        <authorList>
            <person name="Howe K."/>
            <person name="Clark M.D."/>
            <person name="Torroja C.F."/>
            <person name="Torrance J."/>
            <person name="Berthelot C."/>
            <person name="Muffato M."/>
            <person name="Collins J.E."/>
            <person name="Humphray S."/>
            <person name="McLaren K."/>
            <person name="Matthews L."/>
            <person name="McLaren S."/>
            <person name="Sealy I."/>
            <person name="Caccamo M."/>
            <person name="Churcher C."/>
            <person name="Scott C."/>
            <person name="Barrett J.C."/>
            <person name="Koch R."/>
            <person name="Rauch G.J."/>
            <person name="White S."/>
            <person name="Chow W."/>
            <person name="Kilian B."/>
            <person name="Quintais L.T."/>
            <person name="Guerra-Assuncao J.A."/>
            <person name="Zhou Y."/>
            <person name="Gu Y."/>
            <person name="Yen J."/>
            <person name="Vogel J.H."/>
            <person name="Eyre T."/>
            <person name="Redmond S."/>
            <person name="Banerjee R."/>
            <person name="Chi J."/>
            <person name="Fu B."/>
            <person name="Langley E."/>
            <person name="Maguire S.F."/>
            <person name="Laird G.K."/>
            <person name="Lloyd D."/>
            <person name="Kenyon E."/>
            <person name="Donaldson S."/>
            <person name="Sehra H."/>
            <person name="Almeida-King J."/>
            <person name="Loveland J."/>
            <person name="Trevanion S."/>
            <person name="Jones M."/>
            <person name="Quail M."/>
            <person name="Willey D."/>
            <person name="Hunt A."/>
            <person name="Burton J."/>
            <person name="Sims S."/>
            <person name="McLay K."/>
            <person name="Plumb B."/>
            <person name="Davis J."/>
            <person name="Clee C."/>
            <person name="Oliver K."/>
            <person name="Clark R."/>
            <person name="Riddle C."/>
            <person name="Elliot D."/>
            <person name="Threadgold G."/>
            <person name="Harden G."/>
            <person name="Ware D."/>
            <person name="Begum S."/>
            <person name="Mortimore B."/>
            <person name="Kerry G."/>
            <person name="Heath P."/>
            <person name="Phillimore B."/>
            <person name="Tracey A."/>
            <person name="Corby N."/>
            <person name="Dunn M."/>
            <person name="Johnson C."/>
            <person name="Wood J."/>
            <person name="Clark S."/>
            <person name="Pelan S."/>
            <person name="Griffiths G."/>
            <person name="Smith M."/>
            <person name="Glithero R."/>
            <person name="Howden P."/>
            <person name="Barker N."/>
            <person name="Lloyd C."/>
            <person name="Stevens C."/>
            <person name="Harley J."/>
            <person name="Holt K."/>
            <person name="Panagiotidis G."/>
            <person name="Lovell J."/>
            <person name="Beasley H."/>
            <person name="Henderson C."/>
            <person name="Gordon D."/>
            <person name="Auger K."/>
            <person name="Wright D."/>
            <person name="Collins J."/>
            <person name="Raisen C."/>
            <person name="Dyer L."/>
            <person name="Leung K."/>
            <person name="Robertson L."/>
            <person name="Ambridge K."/>
            <person name="Leongamornlert D."/>
            <person name="McGuire S."/>
            <person name="Gilderthorp R."/>
            <person name="Griffiths C."/>
            <person name="Manthravadi D."/>
            <person name="Nichol S."/>
            <person name="Barker G."/>
            <person name="Whitehead S."/>
            <person name="Kay M."/>
            <person name="Brown J."/>
            <person name="Murnane C."/>
            <person name="Gray E."/>
            <person name="Humphries M."/>
            <person name="Sycamore N."/>
            <person name="Barker D."/>
            <person name="Saunders D."/>
            <person name="Wallis J."/>
            <person name="Babbage A."/>
            <person name="Hammond S."/>
            <person name="Mashreghi-Mohammadi M."/>
            <person name="Barr L."/>
            <person name="Martin S."/>
            <person name="Wray P."/>
            <person name="Ellington A."/>
            <person name="Matthews N."/>
            <person name="Ellwood M."/>
            <person name="Woodmansey R."/>
            <person name="Clark G."/>
            <person name="Cooper J."/>
            <person name="Tromans A."/>
            <person name="Grafham D."/>
            <person name="Skuce C."/>
            <person name="Pandian R."/>
            <person name="Andrews R."/>
            <person name="Harrison E."/>
            <person name="Kimberley A."/>
            <person name="Garnett J."/>
            <person name="Fosker N."/>
            <person name="Hall R."/>
            <person name="Garner P."/>
            <person name="Kelly D."/>
            <person name="Bird C."/>
            <person name="Palmer S."/>
            <person name="Gehring I."/>
            <person name="Berger A."/>
            <person name="Dooley C.M."/>
            <person name="Ersan-Urun Z."/>
            <person name="Eser C."/>
            <person name="Geiger H."/>
            <person name="Geisler M."/>
            <person name="Karotki L."/>
            <person name="Kirn A."/>
            <person name="Konantz J."/>
            <person name="Konantz M."/>
            <person name="Oberlander M."/>
            <person name="Rudolph-Geiger S."/>
            <person name="Teucke M."/>
            <person name="Lanz C."/>
            <person name="Raddatz G."/>
            <person name="Osoegawa K."/>
            <person name="Zhu B."/>
            <person name="Rapp A."/>
            <person name="Widaa S."/>
            <person name="Langford C."/>
            <person name="Yang F."/>
            <person name="Schuster S.C."/>
            <person name="Carter N.P."/>
            <person name="Harrow J."/>
            <person name="Ning Z."/>
            <person name="Herrero J."/>
            <person name="Searle S.M."/>
            <person name="Enright A."/>
            <person name="Geisler R."/>
            <person name="Plasterk R.H."/>
            <person name="Lee C."/>
            <person name="Westerfield M."/>
            <person name="de Jong P.J."/>
            <person name="Zon L.I."/>
            <person name="Postlethwait J.H."/>
            <person name="Nusslein-Volhard C."/>
            <person name="Hubbard T.J."/>
            <person name="Roest Crollius H."/>
            <person name="Rogers J."/>
            <person name="Stemple D.L."/>
        </authorList>
    </citation>
    <scope>NUCLEOTIDE SEQUENCE [LARGE SCALE GENOMIC DNA]</scope>
    <source>
        <strain>Tuebingen</strain>
    </source>
</reference>
<reference key="3">
    <citation type="submission" date="2007-10" db="EMBL/GenBank/DDBJ databases">
        <authorList>
            <consortium name="NIH - Zebrafish Gene Collection (ZGC) project"/>
        </authorList>
    </citation>
    <scope>NUCLEOTIDE SEQUENCE [LARGE SCALE MRNA]</scope>
    <source>
        <tissue>Embryo</tissue>
    </source>
</reference>
<reference key="4">
    <citation type="journal article" date="2012" name="Hum. Mol. Genet.">
        <title>GLUT10 is required for the development of the cardiovascular system and the notochord and connects mitochondrial function to TGFbeta signaling.</title>
        <authorList>
            <person name="Willaert A."/>
            <person name="Khatri S."/>
            <person name="Callewaert B.L."/>
            <person name="Coucke P.J."/>
            <person name="Crosby S.D."/>
            <person name="Lee J.G."/>
            <person name="Davis E.C."/>
            <person name="Shiva S."/>
            <person name="Tsang M."/>
            <person name="De Paepe A."/>
            <person name="Urban Z."/>
        </authorList>
    </citation>
    <scope>FUNCTION</scope>
    <scope>DISRUPTION PHENOTYPE</scope>
</reference>
<protein>
    <recommendedName>
        <fullName evidence="9">Solute carrier family 2, facilitated glucose transporter member 10</fullName>
    </recommendedName>
    <alternativeName>
        <fullName evidence="8">Glucose transporter type 10</fullName>
        <shortName evidence="8">GLUT-10</shortName>
    </alternativeName>
</protein>
<accession>F1R0H0</accession>
<accession>A8KB28</accession>
<accession>I1SV80</accession>
<dbReference type="EMBL" id="HM560591">
    <property type="protein sequence ID" value="AEF56581.1"/>
    <property type="molecule type" value="mRNA"/>
</dbReference>
<dbReference type="EMBL" id="HM560592">
    <property type="protein sequence ID" value="AEF56582.1"/>
    <property type="molecule type" value="mRNA"/>
</dbReference>
<dbReference type="EMBL" id="CU928126">
    <property type="status" value="NOT_ANNOTATED_CDS"/>
    <property type="molecule type" value="Genomic_DNA"/>
</dbReference>
<dbReference type="EMBL" id="BC153938">
    <property type="protein sequence ID" value="AAI53939.1"/>
    <property type="molecule type" value="mRNA"/>
</dbReference>
<dbReference type="RefSeq" id="NP_001104633.1">
    <property type="nucleotide sequence ID" value="NM_001111163.1"/>
</dbReference>
<dbReference type="RefSeq" id="XP_005172836.1">
    <property type="nucleotide sequence ID" value="XM_005172779.5"/>
</dbReference>
<dbReference type="SMR" id="F1R0H0"/>
<dbReference type="FunCoup" id="F1R0H0">
    <property type="interactions" value="1"/>
</dbReference>
<dbReference type="STRING" id="7955.ENSDARP00000130266"/>
<dbReference type="TCDB" id="2.A.1.1.85">
    <property type="family name" value="the major facilitator superfamily (mfs)"/>
</dbReference>
<dbReference type="GlyCosmos" id="F1R0H0">
    <property type="glycosylation" value="2 sites, No reported glycans"/>
</dbReference>
<dbReference type="PaxDb" id="7955-ENSDARP00000104821"/>
<dbReference type="Ensembl" id="ENSDART00000167938">
    <property type="protein sequence ID" value="ENSDARP00000130266"/>
    <property type="gene ID" value="ENSDARG00000090820"/>
</dbReference>
<dbReference type="Ensembl" id="ENSDART00000171219">
    <property type="protein sequence ID" value="ENSDARP00000135785"/>
    <property type="gene ID" value="ENSDARG00000090820"/>
</dbReference>
<dbReference type="GeneID" id="560546"/>
<dbReference type="KEGG" id="dre:560546"/>
<dbReference type="AGR" id="ZFIN:ZDB-GENE-080204-6"/>
<dbReference type="CTD" id="81031"/>
<dbReference type="ZFIN" id="ZDB-GENE-080204-6">
    <property type="gene designation" value="slc2a10"/>
</dbReference>
<dbReference type="eggNOG" id="KOG0254">
    <property type="taxonomic scope" value="Eukaryota"/>
</dbReference>
<dbReference type="InParanoid" id="F1R0H0"/>
<dbReference type="OMA" id="GCYRIPV"/>
<dbReference type="OrthoDB" id="4142200at2759"/>
<dbReference type="PhylomeDB" id="F1R0H0"/>
<dbReference type="TreeFam" id="TF332408"/>
<dbReference type="Reactome" id="R-DRE-189200">
    <property type="pathway name" value="Cellular hexose transport"/>
</dbReference>
<dbReference type="PRO" id="PR:F1R0H0"/>
<dbReference type="Proteomes" id="UP000000437">
    <property type="component" value="Chromosome 11"/>
</dbReference>
<dbReference type="Bgee" id="ENSDARG00000090820">
    <property type="expression patterns" value="Expressed in mature ovarian follicle and 33 other cell types or tissues"/>
</dbReference>
<dbReference type="GO" id="GO:0012505">
    <property type="term" value="C:endomembrane system"/>
    <property type="evidence" value="ECO:0007669"/>
    <property type="project" value="UniProtKB-SubCell"/>
</dbReference>
<dbReference type="GO" id="GO:0016020">
    <property type="term" value="C:membrane"/>
    <property type="evidence" value="ECO:0000318"/>
    <property type="project" value="GO_Central"/>
</dbReference>
<dbReference type="GO" id="GO:0048471">
    <property type="term" value="C:perinuclear region of cytoplasm"/>
    <property type="evidence" value="ECO:0007669"/>
    <property type="project" value="UniProtKB-SubCell"/>
</dbReference>
<dbReference type="GO" id="GO:0055056">
    <property type="term" value="F:D-glucose transmembrane transporter activity"/>
    <property type="evidence" value="ECO:0000318"/>
    <property type="project" value="GO_Central"/>
</dbReference>
<dbReference type="GO" id="GO:0072359">
    <property type="term" value="P:circulatory system development"/>
    <property type="evidence" value="ECO:0000315"/>
    <property type="project" value="ZFIN"/>
</dbReference>
<dbReference type="GO" id="GO:1904659">
    <property type="term" value="P:D-glucose transmembrane transport"/>
    <property type="evidence" value="ECO:0000318"/>
    <property type="project" value="GO_Central"/>
</dbReference>
<dbReference type="GO" id="GO:0030903">
    <property type="term" value="P:notochord development"/>
    <property type="evidence" value="ECO:0000315"/>
    <property type="project" value="ZFIN"/>
</dbReference>
<dbReference type="CDD" id="cd17436">
    <property type="entry name" value="MFS_GLUT10_Class3"/>
    <property type="match status" value="1"/>
</dbReference>
<dbReference type="FunFam" id="1.20.1250.20:FF:000790">
    <property type="entry name" value="Solute carrier family 2 member 10"/>
    <property type="match status" value="1"/>
</dbReference>
<dbReference type="FunFam" id="1.20.1250.20:FF:000164">
    <property type="entry name" value="solute carrier family 2, facilitated glucose transporter member 10"/>
    <property type="match status" value="1"/>
</dbReference>
<dbReference type="Gene3D" id="1.20.1250.20">
    <property type="entry name" value="MFS general substrate transporter like domains"/>
    <property type="match status" value="2"/>
</dbReference>
<dbReference type="InterPro" id="IPR020846">
    <property type="entry name" value="MFS_dom"/>
</dbReference>
<dbReference type="InterPro" id="IPR005828">
    <property type="entry name" value="MFS_sugar_transport-like"/>
</dbReference>
<dbReference type="InterPro" id="IPR050820">
    <property type="entry name" value="MFS_Sugar_Transporter"/>
</dbReference>
<dbReference type="InterPro" id="IPR036259">
    <property type="entry name" value="MFS_trans_sf"/>
</dbReference>
<dbReference type="InterPro" id="IPR003663">
    <property type="entry name" value="Sugar/inositol_transpt"/>
</dbReference>
<dbReference type="InterPro" id="IPR005829">
    <property type="entry name" value="Sugar_transporter_CS"/>
</dbReference>
<dbReference type="PANTHER" id="PTHR48023">
    <property type="entry name" value="D-XYLOSE-PROTON SYMPORTER-LIKE 2"/>
    <property type="match status" value="1"/>
</dbReference>
<dbReference type="PANTHER" id="PTHR48023:SF7">
    <property type="entry name" value="SOLUTE CARRIER FAMILY 2, FACILITATED GLUCOSE TRANSPORTER MEMBER 10"/>
    <property type="match status" value="1"/>
</dbReference>
<dbReference type="Pfam" id="PF00083">
    <property type="entry name" value="Sugar_tr"/>
    <property type="match status" value="2"/>
</dbReference>
<dbReference type="PRINTS" id="PR00171">
    <property type="entry name" value="SUGRTRNSPORT"/>
</dbReference>
<dbReference type="SUPFAM" id="SSF103473">
    <property type="entry name" value="MFS general substrate transporter"/>
    <property type="match status" value="1"/>
</dbReference>
<dbReference type="PROSITE" id="PS50850">
    <property type="entry name" value="MFS"/>
    <property type="match status" value="1"/>
</dbReference>
<dbReference type="PROSITE" id="PS00216">
    <property type="entry name" value="SUGAR_TRANSPORT_1"/>
    <property type="match status" value="1"/>
</dbReference>
<sequence>MGCSVLLLTITVSTLGGLVFGYELGIISGALPQLQTHFSLGCVQQEAVVSALLIGSLFASIIGGWLIDRHGRRTSILLSNLLILAGSVILTTGTSFFALVIGRAVIGFAMTVSSMSCCIFVSEMVTPERRGLMVTLYEVGITVGILIAYAVNYIFNNVPLTGWRYMFGFAIIPSLIQLASIVLLPKQAEVFVIHDDDSRQADRLTEETETSNQHQQSEKYGVSDLFKSKDNMRRRTVIGVGLVLSQQFTGQPNVLFYASTILFSVGFQSNASAILASVGFGIVKVIATLLAMLCSDRAGRRSLLIGGCSMLAVGLILTGFLCRQSVIDTTKRCTSVGPHSNLTLSAEHDEGVGFSSQTLDVHEHLRSFSQSEDIYKWIIFTCLMAVVSAFSVSFGPMTWVVLSEIFPKDIRGRAFSFINCFNVGANLIVSFSFLSIIDVIGLSGVFLMYGVVGIAGVVFIYLVLPETKGKSLQDIDRELSQTRMIHRQELCSIFQRRRFSPGYQRVQLTSTAT</sequence>
<comment type="function">
    <text evidence="6">Facilitative glucose transporter required for the development of the cardiovascular system.</text>
</comment>
<comment type="catalytic activity">
    <reaction evidence="1">
        <text>D-glucose(out) = D-glucose(in)</text>
        <dbReference type="Rhea" id="RHEA:60376"/>
        <dbReference type="ChEBI" id="CHEBI:4167"/>
    </reaction>
</comment>
<comment type="subcellular location">
    <subcellularLocation>
        <location evidence="1">Endomembrane system</location>
        <topology evidence="3">Multi-pass membrane protein</topology>
    </subcellularLocation>
    <subcellularLocation>
        <location evidence="1">Cytoplasm</location>
        <location evidence="1">Perinuclear region</location>
    </subcellularLocation>
</comment>
<comment type="developmental stage">
    <text evidence="5">Expressed both maternally and zygotically (PubMed:21553381). Ubiquitous expression until the early somitogenesis stage (PubMed:21553381). In later embryonic stages, detected in the otic vesicles, hatching gland cells, pectoral fin, posterior tectum and swim bladder (PubMed:21553381).</text>
</comment>
<comment type="disruption phenotype">
    <text evidence="6">Morpholino knockdown of the protein causes notochord and cardiovascular abnormalities (PubMed:22116938). Fishes display a reduced heart rate and blood flow, coupled with an incomplete and irregular vascular patterning (PubMed:22116938).</text>
</comment>
<comment type="similarity">
    <text evidence="9">Belongs to the major facilitator superfamily. Sugar transporter (TC 2.A.1.1) family. Glucose transporter subfamily.</text>
</comment>
<keyword id="KW-0963">Cytoplasm</keyword>
<keyword id="KW-0325">Glycoprotein</keyword>
<keyword id="KW-0472">Membrane</keyword>
<keyword id="KW-1185">Reference proteome</keyword>
<keyword id="KW-0762">Sugar transport</keyword>
<keyword id="KW-0812">Transmembrane</keyword>
<keyword id="KW-1133">Transmembrane helix</keyword>
<keyword id="KW-0813">Transport</keyword>